<organism>
    <name type="scientific">Chloroflexus aurantiacus (strain ATCC 29366 / DSM 635 / J-10-fl)</name>
    <dbReference type="NCBI Taxonomy" id="324602"/>
    <lineage>
        <taxon>Bacteria</taxon>
        <taxon>Bacillati</taxon>
        <taxon>Chloroflexota</taxon>
        <taxon>Chloroflexia</taxon>
        <taxon>Chloroflexales</taxon>
        <taxon>Chloroflexineae</taxon>
        <taxon>Chloroflexaceae</taxon>
        <taxon>Chloroflexus</taxon>
    </lineage>
</organism>
<name>ILVD_CHLAA</name>
<protein>
    <recommendedName>
        <fullName evidence="1">Dihydroxy-acid dehydratase</fullName>
        <shortName evidence="1">DAD</shortName>
        <ecNumber evidence="1">4.2.1.9</ecNumber>
    </recommendedName>
</protein>
<dbReference type="EC" id="4.2.1.9" evidence="1"/>
<dbReference type="EMBL" id="CP000909">
    <property type="protein sequence ID" value="ABY36052.1"/>
    <property type="molecule type" value="Genomic_DNA"/>
</dbReference>
<dbReference type="RefSeq" id="WP_012258705.1">
    <property type="nucleotide sequence ID" value="NC_010175.1"/>
</dbReference>
<dbReference type="RefSeq" id="YP_001636441.1">
    <property type="nucleotide sequence ID" value="NC_010175.1"/>
</dbReference>
<dbReference type="SMR" id="A9WF68"/>
<dbReference type="FunCoup" id="A9WF68">
    <property type="interactions" value="460"/>
</dbReference>
<dbReference type="STRING" id="324602.Caur_2851"/>
<dbReference type="EnsemblBacteria" id="ABY36052">
    <property type="protein sequence ID" value="ABY36052"/>
    <property type="gene ID" value="Caur_2851"/>
</dbReference>
<dbReference type="KEGG" id="cau:Caur_2851"/>
<dbReference type="PATRIC" id="fig|324602.8.peg.3210"/>
<dbReference type="eggNOG" id="COG0129">
    <property type="taxonomic scope" value="Bacteria"/>
</dbReference>
<dbReference type="HOGENOM" id="CLU_014271_4_2_0"/>
<dbReference type="InParanoid" id="A9WF68"/>
<dbReference type="UniPathway" id="UPA00047">
    <property type="reaction ID" value="UER00057"/>
</dbReference>
<dbReference type="UniPathway" id="UPA00049">
    <property type="reaction ID" value="UER00061"/>
</dbReference>
<dbReference type="Proteomes" id="UP000002008">
    <property type="component" value="Chromosome"/>
</dbReference>
<dbReference type="GO" id="GO:0051537">
    <property type="term" value="F:2 iron, 2 sulfur cluster binding"/>
    <property type="evidence" value="ECO:0007669"/>
    <property type="project" value="UniProtKB-UniRule"/>
</dbReference>
<dbReference type="GO" id="GO:0004160">
    <property type="term" value="F:dihydroxy-acid dehydratase activity"/>
    <property type="evidence" value="ECO:0000318"/>
    <property type="project" value="GO_Central"/>
</dbReference>
<dbReference type="GO" id="GO:0000287">
    <property type="term" value="F:magnesium ion binding"/>
    <property type="evidence" value="ECO:0007669"/>
    <property type="project" value="UniProtKB-UniRule"/>
</dbReference>
<dbReference type="GO" id="GO:0009082">
    <property type="term" value="P:branched-chain amino acid biosynthetic process"/>
    <property type="evidence" value="ECO:0000318"/>
    <property type="project" value="GO_Central"/>
</dbReference>
<dbReference type="GO" id="GO:0009097">
    <property type="term" value="P:isoleucine biosynthetic process"/>
    <property type="evidence" value="ECO:0007669"/>
    <property type="project" value="UniProtKB-UniRule"/>
</dbReference>
<dbReference type="GO" id="GO:0009099">
    <property type="term" value="P:L-valine biosynthetic process"/>
    <property type="evidence" value="ECO:0007669"/>
    <property type="project" value="UniProtKB-UniRule"/>
</dbReference>
<dbReference type="FunFam" id="3.50.30.80:FF:000001">
    <property type="entry name" value="Dihydroxy-acid dehydratase"/>
    <property type="match status" value="1"/>
</dbReference>
<dbReference type="Gene3D" id="3.50.30.80">
    <property type="entry name" value="IlvD/EDD C-terminal domain-like"/>
    <property type="match status" value="1"/>
</dbReference>
<dbReference type="HAMAP" id="MF_00012">
    <property type="entry name" value="IlvD"/>
    <property type="match status" value="1"/>
</dbReference>
<dbReference type="InterPro" id="IPR050165">
    <property type="entry name" value="DHAD_IlvD/Edd"/>
</dbReference>
<dbReference type="InterPro" id="IPR042096">
    <property type="entry name" value="Dihydro-acid_dehy_C"/>
</dbReference>
<dbReference type="InterPro" id="IPR004404">
    <property type="entry name" value="DihydroxyA_deHydtase"/>
</dbReference>
<dbReference type="InterPro" id="IPR020558">
    <property type="entry name" value="DiOHA_6PGluconate_deHydtase_CS"/>
</dbReference>
<dbReference type="InterPro" id="IPR056740">
    <property type="entry name" value="ILV_EDD_C"/>
</dbReference>
<dbReference type="InterPro" id="IPR000581">
    <property type="entry name" value="ILV_EDD_N"/>
</dbReference>
<dbReference type="InterPro" id="IPR037237">
    <property type="entry name" value="IlvD/EDD_N"/>
</dbReference>
<dbReference type="NCBIfam" id="TIGR00110">
    <property type="entry name" value="ilvD"/>
    <property type="match status" value="1"/>
</dbReference>
<dbReference type="NCBIfam" id="NF002068">
    <property type="entry name" value="PRK00911.1"/>
    <property type="match status" value="1"/>
</dbReference>
<dbReference type="PANTHER" id="PTHR21000">
    <property type="entry name" value="DIHYDROXY-ACID DEHYDRATASE DAD"/>
    <property type="match status" value="1"/>
</dbReference>
<dbReference type="PANTHER" id="PTHR21000:SF5">
    <property type="entry name" value="DIHYDROXY-ACID DEHYDRATASE, MITOCHONDRIAL"/>
    <property type="match status" value="1"/>
</dbReference>
<dbReference type="Pfam" id="PF24877">
    <property type="entry name" value="ILV_EDD_C"/>
    <property type="match status" value="1"/>
</dbReference>
<dbReference type="Pfam" id="PF00920">
    <property type="entry name" value="ILVD_EDD_N"/>
    <property type="match status" value="1"/>
</dbReference>
<dbReference type="SUPFAM" id="SSF143975">
    <property type="entry name" value="IlvD/EDD N-terminal domain-like"/>
    <property type="match status" value="1"/>
</dbReference>
<dbReference type="SUPFAM" id="SSF52016">
    <property type="entry name" value="LeuD/IlvD-like"/>
    <property type="match status" value="1"/>
</dbReference>
<dbReference type="PROSITE" id="PS00886">
    <property type="entry name" value="ILVD_EDD_1"/>
    <property type="match status" value="1"/>
</dbReference>
<dbReference type="PROSITE" id="PS00887">
    <property type="entry name" value="ILVD_EDD_2"/>
    <property type="match status" value="1"/>
</dbReference>
<keyword id="KW-0001">2Fe-2S</keyword>
<keyword id="KW-0028">Amino-acid biosynthesis</keyword>
<keyword id="KW-0100">Branched-chain amino acid biosynthesis</keyword>
<keyword id="KW-0408">Iron</keyword>
<keyword id="KW-0411">Iron-sulfur</keyword>
<keyword id="KW-0456">Lyase</keyword>
<keyword id="KW-0460">Magnesium</keyword>
<keyword id="KW-0479">Metal-binding</keyword>
<keyword id="KW-1185">Reference proteome</keyword>
<accession>A9WF68</accession>
<reference key="1">
    <citation type="journal article" date="2011" name="BMC Genomics">
        <title>Complete genome sequence of the filamentous anoxygenic phototrophic bacterium Chloroflexus aurantiacus.</title>
        <authorList>
            <person name="Tang K.H."/>
            <person name="Barry K."/>
            <person name="Chertkov O."/>
            <person name="Dalin E."/>
            <person name="Han C.S."/>
            <person name="Hauser L.J."/>
            <person name="Honchak B.M."/>
            <person name="Karbach L.E."/>
            <person name="Land M.L."/>
            <person name="Lapidus A."/>
            <person name="Larimer F.W."/>
            <person name="Mikhailova N."/>
            <person name="Pitluck S."/>
            <person name="Pierson B.K."/>
            <person name="Blankenship R.E."/>
        </authorList>
    </citation>
    <scope>NUCLEOTIDE SEQUENCE [LARGE SCALE GENOMIC DNA]</scope>
    <source>
        <strain>ATCC 29366 / DSM 635 / J-10-fl</strain>
    </source>
</reference>
<comment type="function">
    <text evidence="1">Functions in the biosynthesis of branched-chain amino acids. Catalyzes the dehydration of (2R,3R)-2,3-dihydroxy-3-methylpentanoate (2,3-dihydroxy-3-methylvalerate) into 2-oxo-3-methylpentanoate (2-oxo-3-methylvalerate) and of (2R)-2,3-dihydroxy-3-methylbutanoate (2,3-dihydroxyisovalerate) into 2-oxo-3-methylbutanoate (2-oxoisovalerate), the penultimate precursor to L-isoleucine and L-valine, respectively.</text>
</comment>
<comment type="catalytic activity">
    <reaction evidence="1">
        <text>(2R)-2,3-dihydroxy-3-methylbutanoate = 3-methyl-2-oxobutanoate + H2O</text>
        <dbReference type="Rhea" id="RHEA:24809"/>
        <dbReference type="ChEBI" id="CHEBI:11851"/>
        <dbReference type="ChEBI" id="CHEBI:15377"/>
        <dbReference type="ChEBI" id="CHEBI:49072"/>
        <dbReference type="EC" id="4.2.1.9"/>
    </reaction>
    <physiologicalReaction direction="left-to-right" evidence="1">
        <dbReference type="Rhea" id="RHEA:24810"/>
    </physiologicalReaction>
</comment>
<comment type="catalytic activity">
    <reaction evidence="1">
        <text>(2R,3R)-2,3-dihydroxy-3-methylpentanoate = (S)-3-methyl-2-oxopentanoate + H2O</text>
        <dbReference type="Rhea" id="RHEA:27694"/>
        <dbReference type="ChEBI" id="CHEBI:15377"/>
        <dbReference type="ChEBI" id="CHEBI:35146"/>
        <dbReference type="ChEBI" id="CHEBI:49258"/>
        <dbReference type="EC" id="4.2.1.9"/>
    </reaction>
    <physiologicalReaction direction="left-to-right" evidence="1">
        <dbReference type="Rhea" id="RHEA:27695"/>
    </physiologicalReaction>
</comment>
<comment type="cofactor">
    <cofactor evidence="1">
        <name>[2Fe-2S] cluster</name>
        <dbReference type="ChEBI" id="CHEBI:190135"/>
    </cofactor>
    <text evidence="1">Binds 1 [2Fe-2S] cluster per subunit. This cluster acts as a Lewis acid cofactor.</text>
</comment>
<comment type="cofactor">
    <cofactor evidence="1">
        <name>Mg(2+)</name>
        <dbReference type="ChEBI" id="CHEBI:18420"/>
    </cofactor>
</comment>
<comment type="pathway">
    <text evidence="1">Amino-acid biosynthesis; L-isoleucine biosynthesis; L-isoleucine from 2-oxobutanoate: step 3/4.</text>
</comment>
<comment type="pathway">
    <text evidence="1">Amino-acid biosynthesis; L-valine biosynthesis; L-valine from pyruvate: step 3/4.</text>
</comment>
<comment type="subunit">
    <text evidence="1">Homodimer.</text>
</comment>
<comment type="similarity">
    <text evidence="1">Belongs to the IlvD/Edd family.</text>
</comment>
<gene>
    <name evidence="1" type="primary">ilvD</name>
    <name type="ordered locus">Caur_2851</name>
</gene>
<feature type="chain" id="PRO_1000073969" description="Dihydroxy-acid dehydratase">
    <location>
        <begin position="1"/>
        <end position="561"/>
    </location>
</feature>
<feature type="active site" description="Proton acceptor" evidence="1">
    <location>
        <position position="473"/>
    </location>
</feature>
<feature type="binding site" evidence="1">
    <location>
        <position position="50"/>
    </location>
    <ligand>
        <name>[2Fe-2S] cluster</name>
        <dbReference type="ChEBI" id="CHEBI:190135"/>
    </ligand>
</feature>
<feature type="binding site" evidence="1">
    <location>
        <position position="82"/>
    </location>
    <ligand>
        <name>Mg(2+)</name>
        <dbReference type="ChEBI" id="CHEBI:18420"/>
    </ligand>
</feature>
<feature type="binding site" evidence="1">
    <location>
        <position position="123"/>
    </location>
    <ligand>
        <name>[2Fe-2S] cluster</name>
        <dbReference type="ChEBI" id="CHEBI:190135"/>
    </ligand>
</feature>
<feature type="binding site" evidence="1">
    <location>
        <position position="124"/>
    </location>
    <ligand>
        <name>Mg(2+)</name>
        <dbReference type="ChEBI" id="CHEBI:18420"/>
    </ligand>
</feature>
<feature type="binding site" description="via carbamate group" evidence="1">
    <location>
        <position position="125"/>
    </location>
    <ligand>
        <name>Mg(2+)</name>
        <dbReference type="ChEBI" id="CHEBI:18420"/>
    </ligand>
</feature>
<feature type="binding site" evidence="1">
    <location>
        <position position="195"/>
    </location>
    <ligand>
        <name>[2Fe-2S] cluster</name>
        <dbReference type="ChEBI" id="CHEBI:190135"/>
    </ligand>
</feature>
<feature type="binding site" evidence="1">
    <location>
        <position position="447"/>
    </location>
    <ligand>
        <name>Mg(2+)</name>
        <dbReference type="ChEBI" id="CHEBI:18420"/>
    </ligand>
</feature>
<feature type="modified residue" description="N6-carboxylysine" evidence="1">
    <location>
        <position position="125"/>
    </location>
</feature>
<sequence>MSDNRRSRMITEGPQRSPNRAMLRAVGFGDNDFTKPIVGVANGHSTLTPCNAGLGALAARAEEAIRAAGGMPQIFGTITVSDGISMGTEGMKYSLVSREVIADSIETVVNAQRMDGILAVGGCDKNMPGALIAMARLDIPAIFVYGGTIKPGHYKGRDLTIVSAFEAVGEYSAGRIDEHELLEIERHACPGAGSCGGMYTANTMSSAIEALGLSLPGSSTMAAEDEEKALSAARSGEVLVEAIRANRTARQMLTRKSLENAIAVVMALGGSTNAVLHLLAIAHAADVPLTIDDFETIRQRVPVLCDLKPSGRYVATDLHRVGGVPQVMKILLNAGLLHGDCMTITGQTIAETLADVPDEPPANQDVIRPFSQPIYPQGHLAILRGNLAEEGCVAKITGIKQRRITGPARVFDAEEECLEAILSGKIKAGDVVVIRYEGPKGGPGMREMLAPTSAIIGAGLGDSVGLITDGRFSGGTYGLVVGHVAPEAAVGGTIALVEEGDSITIDADARLLQLNVSDEELARRRAAWQPRPPRYTRGVLAKYARLVSSASLGAVTDRFSE</sequence>
<evidence type="ECO:0000255" key="1">
    <source>
        <dbReference type="HAMAP-Rule" id="MF_00012"/>
    </source>
</evidence>
<proteinExistence type="inferred from homology"/>